<organism>
    <name type="scientific">Haemophilus influenzae (strain PittGG)</name>
    <dbReference type="NCBI Taxonomy" id="374931"/>
    <lineage>
        <taxon>Bacteria</taxon>
        <taxon>Pseudomonadati</taxon>
        <taxon>Pseudomonadota</taxon>
        <taxon>Gammaproteobacteria</taxon>
        <taxon>Pasteurellales</taxon>
        <taxon>Pasteurellaceae</taxon>
        <taxon>Haemophilus</taxon>
    </lineage>
</organism>
<proteinExistence type="inferred from homology"/>
<dbReference type="EMBL" id="CP000672">
    <property type="protein sequence ID" value="ABR00335.1"/>
    <property type="molecule type" value="Genomic_DNA"/>
</dbReference>
<dbReference type="SMR" id="A5UHS9"/>
<dbReference type="KEGG" id="hiq:CGSHiGG_07380"/>
<dbReference type="HOGENOM" id="CLU_122625_1_3_6"/>
<dbReference type="Proteomes" id="UP000001990">
    <property type="component" value="Chromosome"/>
</dbReference>
<dbReference type="GO" id="GO:1990904">
    <property type="term" value="C:ribonucleoprotein complex"/>
    <property type="evidence" value="ECO:0007669"/>
    <property type="project" value="UniProtKB-KW"/>
</dbReference>
<dbReference type="GO" id="GO:0005840">
    <property type="term" value="C:ribosome"/>
    <property type="evidence" value="ECO:0007669"/>
    <property type="project" value="UniProtKB-KW"/>
</dbReference>
<dbReference type="GO" id="GO:0003735">
    <property type="term" value="F:structural constituent of ribosome"/>
    <property type="evidence" value="ECO:0007669"/>
    <property type="project" value="InterPro"/>
</dbReference>
<dbReference type="GO" id="GO:0000049">
    <property type="term" value="F:tRNA binding"/>
    <property type="evidence" value="ECO:0007669"/>
    <property type="project" value="UniProtKB-UniRule"/>
</dbReference>
<dbReference type="GO" id="GO:0006412">
    <property type="term" value="P:translation"/>
    <property type="evidence" value="ECO:0007669"/>
    <property type="project" value="UniProtKB-UniRule"/>
</dbReference>
<dbReference type="FunFam" id="3.30.70.600:FF:000001">
    <property type="entry name" value="30S ribosomal protein S10"/>
    <property type="match status" value="1"/>
</dbReference>
<dbReference type="Gene3D" id="3.30.70.600">
    <property type="entry name" value="Ribosomal protein S10 domain"/>
    <property type="match status" value="1"/>
</dbReference>
<dbReference type="HAMAP" id="MF_00508">
    <property type="entry name" value="Ribosomal_uS10"/>
    <property type="match status" value="1"/>
</dbReference>
<dbReference type="InterPro" id="IPR001848">
    <property type="entry name" value="Ribosomal_uS10"/>
</dbReference>
<dbReference type="InterPro" id="IPR018268">
    <property type="entry name" value="Ribosomal_uS10_CS"/>
</dbReference>
<dbReference type="InterPro" id="IPR027486">
    <property type="entry name" value="Ribosomal_uS10_dom"/>
</dbReference>
<dbReference type="InterPro" id="IPR036838">
    <property type="entry name" value="Ribosomal_uS10_dom_sf"/>
</dbReference>
<dbReference type="NCBIfam" id="NF001861">
    <property type="entry name" value="PRK00596.1"/>
    <property type="match status" value="1"/>
</dbReference>
<dbReference type="NCBIfam" id="TIGR01049">
    <property type="entry name" value="rpsJ_bact"/>
    <property type="match status" value="1"/>
</dbReference>
<dbReference type="PANTHER" id="PTHR11700">
    <property type="entry name" value="30S RIBOSOMAL PROTEIN S10 FAMILY MEMBER"/>
    <property type="match status" value="1"/>
</dbReference>
<dbReference type="Pfam" id="PF00338">
    <property type="entry name" value="Ribosomal_S10"/>
    <property type="match status" value="1"/>
</dbReference>
<dbReference type="PRINTS" id="PR00971">
    <property type="entry name" value="RIBOSOMALS10"/>
</dbReference>
<dbReference type="SMART" id="SM01403">
    <property type="entry name" value="Ribosomal_S10"/>
    <property type="match status" value="1"/>
</dbReference>
<dbReference type="SUPFAM" id="SSF54999">
    <property type="entry name" value="Ribosomal protein S10"/>
    <property type="match status" value="1"/>
</dbReference>
<dbReference type="PROSITE" id="PS00361">
    <property type="entry name" value="RIBOSOMAL_S10"/>
    <property type="match status" value="1"/>
</dbReference>
<protein>
    <recommendedName>
        <fullName evidence="1">Small ribosomal subunit protein uS10</fullName>
    </recommendedName>
    <alternativeName>
        <fullName evidence="2">30S ribosomal protein S10</fullName>
    </alternativeName>
</protein>
<gene>
    <name evidence="1" type="primary">rpsJ</name>
    <name type="ordered locus">CGSHiGG_07380</name>
</gene>
<comment type="function">
    <text evidence="1">Involved in the binding of tRNA to the ribosomes.</text>
</comment>
<comment type="subunit">
    <text evidence="1">Part of the 30S ribosomal subunit.</text>
</comment>
<comment type="similarity">
    <text evidence="1">Belongs to the universal ribosomal protein uS10 family.</text>
</comment>
<evidence type="ECO:0000255" key="1">
    <source>
        <dbReference type="HAMAP-Rule" id="MF_00508"/>
    </source>
</evidence>
<evidence type="ECO:0000305" key="2"/>
<feature type="chain" id="PRO_1000015031" description="Small ribosomal subunit protein uS10">
    <location>
        <begin position="1"/>
        <end position="103"/>
    </location>
</feature>
<sequence length="103" mass="11767">MQNQRIRIRLKAFDHRLIDQSTAEIVETAKRTGAQVRGPIPLPTRKERFTVLISPHVNKDARDQYEIRTHKRLVDIVEPTEKTVDALMRLDLAAGVDVQISLG</sequence>
<reference key="1">
    <citation type="journal article" date="2007" name="Genome Biol.">
        <title>Characterization and modeling of the Haemophilus influenzae core and supragenomes based on the complete genomic sequences of Rd and 12 clinical nontypeable strains.</title>
        <authorList>
            <person name="Hogg J.S."/>
            <person name="Hu F.Z."/>
            <person name="Janto B."/>
            <person name="Boissy R."/>
            <person name="Hayes J."/>
            <person name="Keefe R."/>
            <person name="Post J.C."/>
            <person name="Ehrlich G.D."/>
        </authorList>
    </citation>
    <scope>NUCLEOTIDE SEQUENCE [LARGE SCALE GENOMIC DNA]</scope>
    <source>
        <strain>PittGG</strain>
    </source>
</reference>
<accession>A5UHS9</accession>
<name>RS10_HAEIG</name>
<keyword id="KW-0687">Ribonucleoprotein</keyword>
<keyword id="KW-0689">Ribosomal protein</keyword>